<organism>
    <name type="scientific">Stutzerimonas stutzeri</name>
    <name type="common">Pseudomonas stutzeri</name>
    <dbReference type="NCBI Taxonomy" id="316"/>
    <lineage>
        <taxon>Bacteria</taxon>
        <taxon>Pseudomonadati</taxon>
        <taxon>Pseudomonadota</taxon>
        <taxon>Gammaproteobacteria</taxon>
        <taxon>Pseudomonadales</taxon>
        <taxon>Pseudomonadaceae</taxon>
        <taxon>Stutzerimonas</taxon>
    </lineage>
</organism>
<evidence type="ECO:0000255" key="1"/>
<evidence type="ECO:0000255" key="2">
    <source>
        <dbReference type="PROSITE-ProRule" id="PRU00433"/>
    </source>
</evidence>
<evidence type="ECO:0000269" key="3">
    <source>
    </source>
</evidence>
<evidence type="ECO:0000305" key="4"/>
<reference key="1">
    <citation type="journal article" date="1994" name="Eur. J. Biochem.">
        <title>Nitric oxide reductase from Pseudomonas stutzeri. Primary structure and gene organization of a novel bacterial cytochrome bc complex.</title>
        <authorList>
            <person name="Zumft W.G."/>
            <person name="Braun C."/>
            <person name="Cuypers H."/>
        </authorList>
    </citation>
    <scope>NUCLEOTIDE SEQUENCE [GENOMIC DNA]</scope>
    <source>
        <strain>ATCC 14405 / JCM 20778 / CIP 107696 / IAM 12931 / LMG 2243 / NCIMB 568 / Baumann 218 / ZoBell 632</strain>
    </source>
</reference>
<reference key="2">
    <citation type="journal article" date="1992" name="J. Bacteriol.">
        <title>The structural genes of the nitric oxide reductase complex from Pseudomonas stutzeri are part of a 30-kilobase gene cluster for denitrification.</title>
        <authorList>
            <person name="Braun C."/>
            <person name="Zumft W.G."/>
        </authorList>
    </citation>
    <scope>PROTEIN SEQUENCE OF 2-21</scope>
    <source>
        <strain>ATCC 14405 / JCM 20778 / CIP 107696 / IAM 12931 / LMG 2243 / NCIMB 568 / Baumann 218 / ZoBell 632</strain>
    </source>
</reference>
<reference key="3">
    <citation type="journal article" date="1989" name="J. Bacteriol.">
        <title>Formation of the N-N bond from nitric oxide by a membrane-bound cytochrome bc complex of nitrate-respiring (denitrifying) Pseudomonas stutzeri.</title>
        <authorList>
            <person name="Heiss B."/>
            <person name="Frunzke K."/>
            <person name="Zumft W.G."/>
        </authorList>
    </citation>
    <scope>EPR SPECTROSCOPY</scope>
    <source>
        <strain>ATCC 14405 / JCM 20778 / CIP 107696 / IAM 12931 / LMG 2243 / NCIMB 568 / Baumann 218 / ZoBell 632</strain>
    </source>
</reference>
<reference key="4">
    <citation type="journal article" date="1998" name="Biochemistry">
        <title>The MCD and EPR of the heme centers of nitric oxide reductase from Pseudomonas stutzeri: evidence that the enzyme is structurally related to the heme-copper oxidases.</title>
        <authorList>
            <person name="Cheesman M.R."/>
            <person name="Zumft W.G."/>
            <person name="Thomson A.J."/>
        </authorList>
    </citation>
    <scope>EPR SPECTROSCOPY</scope>
    <source>
        <strain>ATCC 14405 / JCM 20778 / CIP 107696 / IAM 12931 / LMG 2243 / NCIMB 568 / Baumann 218 / ZoBell 632</strain>
    </source>
</reference>
<accession>Q52527</accession>
<name>NORC_STUST</name>
<feature type="initiator methionine" description="Removed" evidence="3">
    <location>
        <position position="1"/>
    </location>
</feature>
<feature type="chain" id="PRO_0000108425" description="Nitric oxide reductase subunit C">
    <location>
        <begin position="2"/>
        <end position="146"/>
    </location>
</feature>
<feature type="transmembrane region" description="Helical; Signal-anchor" evidence="1">
    <location>
        <begin position="13"/>
        <end position="29"/>
    </location>
</feature>
<feature type="binding site" description="covalent" evidence="2">
    <location>
        <position position="61"/>
    </location>
    <ligand>
        <name>heme c</name>
        <dbReference type="ChEBI" id="CHEBI:61717"/>
    </ligand>
</feature>
<feature type="binding site" description="covalent" evidence="2">
    <location>
        <position position="64"/>
    </location>
    <ligand>
        <name>heme c</name>
        <dbReference type="ChEBI" id="CHEBI:61717"/>
    </ligand>
</feature>
<feature type="binding site" description="axial binding residue" evidence="2">
    <location>
        <position position="65"/>
    </location>
    <ligand>
        <name>heme c</name>
        <dbReference type="ChEBI" id="CHEBI:61717"/>
    </ligand>
    <ligandPart>
        <name>Fe</name>
        <dbReference type="ChEBI" id="CHEBI:18248"/>
    </ligandPart>
</feature>
<comment type="function">
    <text>Component of the anaerobic respiratory chain that transforms nitrate to dinitrogen (denitrification).</text>
</comment>
<comment type="subunit">
    <text>Heterodimer of cytochromes b (large subunit) and c (small subunit).</text>
</comment>
<comment type="subcellular location">
    <subcellularLocation>
        <location>Cell membrane</location>
        <topology>Single-pass membrane protein</topology>
    </subcellularLocation>
    <text>May be attached to the membrane by a signal-anchor.</text>
</comment>
<comment type="induction">
    <text evidence="4">By nitric oxide.</text>
</comment>
<keyword id="KW-1003">Cell membrane</keyword>
<keyword id="KW-0903">Direct protein sequencing</keyword>
<keyword id="KW-0249">Electron transport</keyword>
<keyword id="KW-0349">Heme</keyword>
<keyword id="KW-0408">Iron</keyword>
<keyword id="KW-0472">Membrane</keyword>
<keyword id="KW-0479">Metal-binding</keyword>
<keyword id="KW-0679">Respiratory chain</keyword>
<keyword id="KW-0735">Signal-anchor</keyword>
<keyword id="KW-0812">Transmembrane</keyword>
<keyword id="KW-1133">Transmembrane helix</keyword>
<keyword id="KW-0813">Transport</keyword>
<protein>
    <recommendedName>
        <fullName>Nitric oxide reductase subunit C</fullName>
    </recommendedName>
    <alternativeName>
        <fullName>NOR small subunit</fullName>
    </alternativeName>
    <alternativeName>
        <fullName>Nitric oxide reductase cytochrome c subunit</fullName>
    </alternativeName>
</protein>
<sequence>MSETFTKGMARNIYFGGSVFFFLVFLGLTYHTEQTFPERTNESEMTEAVVRGKEVWENNNCIGCHSLLGEGAYFAPELGNVFVRRGGEETFKPFLHAWMKAQPLGAPGRRAMPQFNLSEQQVDDMAEFLKWTSKIDTNDWPPNKEG</sequence>
<gene>
    <name type="primary">norC</name>
</gene>
<dbReference type="EMBL" id="X53676">
    <property type="protein sequence ID" value="CAA82228.1"/>
    <property type="molecule type" value="Genomic_DNA"/>
</dbReference>
<dbReference type="PIR" id="S41116">
    <property type="entry name" value="S41116"/>
</dbReference>
<dbReference type="RefSeq" id="WP_058065565.1">
    <property type="nucleotide sequence ID" value="NZ_CP152340.1"/>
</dbReference>
<dbReference type="SMR" id="Q52527"/>
<dbReference type="TCDB" id="3.D.4.10.2">
    <property type="family name" value="the proton-translocating cytochrome oxidase (cox) superfamily"/>
</dbReference>
<dbReference type="eggNOG" id="COG2010">
    <property type="taxonomic scope" value="Bacteria"/>
</dbReference>
<dbReference type="BioCyc" id="MetaCyc:MONOMER-242"/>
<dbReference type="GO" id="GO:0005886">
    <property type="term" value="C:plasma membrane"/>
    <property type="evidence" value="ECO:0007669"/>
    <property type="project" value="UniProtKB-SubCell"/>
</dbReference>
<dbReference type="GO" id="GO:0009055">
    <property type="term" value="F:electron transfer activity"/>
    <property type="evidence" value="ECO:0007669"/>
    <property type="project" value="InterPro"/>
</dbReference>
<dbReference type="GO" id="GO:0020037">
    <property type="term" value="F:heme binding"/>
    <property type="evidence" value="ECO:0007669"/>
    <property type="project" value="InterPro"/>
</dbReference>
<dbReference type="GO" id="GO:0046872">
    <property type="term" value="F:metal ion binding"/>
    <property type="evidence" value="ECO:0007669"/>
    <property type="project" value="UniProtKB-KW"/>
</dbReference>
<dbReference type="Gene3D" id="1.10.760.10">
    <property type="entry name" value="Cytochrome c-like domain"/>
    <property type="match status" value="1"/>
</dbReference>
<dbReference type="InterPro" id="IPR009056">
    <property type="entry name" value="Cyt_c-like_dom"/>
</dbReference>
<dbReference type="InterPro" id="IPR036909">
    <property type="entry name" value="Cyt_c-like_dom_sf"/>
</dbReference>
<dbReference type="InterPro" id="IPR051811">
    <property type="entry name" value="Cytochrome_c550/c551-like"/>
</dbReference>
<dbReference type="PANTHER" id="PTHR37823">
    <property type="entry name" value="CYTOCHROME C-553-LIKE"/>
    <property type="match status" value="1"/>
</dbReference>
<dbReference type="PANTHER" id="PTHR37823:SF1">
    <property type="entry name" value="CYTOCHROME C-553-LIKE"/>
    <property type="match status" value="1"/>
</dbReference>
<dbReference type="Pfam" id="PF00034">
    <property type="entry name" value="Cytochrom_C"/>
    <property type="match status" value="1"/>
</dbReference>
<dbReference type="SUPFAM" id="SSF46626">
    <property type="entry name" value="Cytochrome c"/>
    <property type="match status" value="1"/>
</dbReference>
<dbReference type="PROSITE" id="PS51007">
    <property type="entry name" value="CYTC"/>
    <property type="match status" value="1"/>
</dbReference>
<proteinExistence type="evidence at protein level"/>